<dbReference type="EMBL" id="AE006468">
    <property type="protein sequence ID" value="AAL23164.1"/>
    <property type="molecule type" value="Genomic_DNA"/>
</dbReference>
<dbReference type="RefSeq" id="NP_463205.1">
    <property type="nucleotide sequence ID" value="NC_003197.2"/>
</dbReference>
<dbReference type="RefSeq" id="WP_000208749.1">
    <property type="nucleotide sequence ID" value="NC_003197.2"/>
</dbReference>
<dbReference type="SMR" id="P67638"/>
<dbReference type="STRING" id="99287.STM4341"/>
<dbReference type="PaxDb" id="99287-STM4341"/>
<dbReference type="GeneID" id="1255867"/>
<dbReference type="KEGG" id="stm:STM4341"/>
<dbReference type="PATRIC" id="fig|99287.12.peg.4568"/>
<dbReference type="HOGENOM" id="CLU_156492_0_0_6"/>
<dbReference type="OMA" id="MTATWWQ"/>
<dbReference type="PhylomeDB" id="P67638"/>
<dbReference type="BioCyc" id="SENT99287:STM4341-MONOMER"/>
<dbReference type="Proteomes" id="UP000001014">
    <property type="component" value="Chromosome"/>
</dbReference>
<dbReference type="GO" id="GO:0045283">
    <property type="term" value="C:fumarate reductase complex"/>
    <property type="evidence" value="ECO:0007669"/>
    <property type="project" value="UniProtKB-UniRule"/>
</dbReference>
<dbReference type="GO" id="GO:0005886">
    <property type="term" value="C:plasma membrane"/>
    <property type="evidence" value="ECO:0007669"/>
    <property type="project" value="UniProtKB-SubCell"/>
</dbReference>
<dbReference type="GO" id="GO:0000104">
    <property type="term" value="F:succinate dehydrogenase activity"/>
    <property type="evidence" value="ECO:0007669"/>
    <property type="project" value="UniProtKB-UniRule"/>
</dbReference>
<dbReference type="CDD" id="cd00546">
    <property type="entry name" value="QFR_TypeD_subunitC"/>
    <property type="match status" value="1"/>
</dbReference>
<dbReference type="Gene3D" id="1.20.1300.10">
    <property type="entry name" value="Fumarate reductase/succinate dehydrogenase, transmembrane subunit"/>
    <property type="match status" value="1"/>
</dbReference>
<dbReference type="HAMAP" id="MF_00708">
    <property type="entry name" value="Fumarate_red_C"/>
    <property type="match status" value="1"/>
</dbReference>
<dbReference type="InterPro" id="IPR003510">
    <property type="entry name" value="Fumarate_red_C"/>
</dbReference>
<dbReference type="InterPro" id="IPR034804">
    <property type="entry name" value="SQR/QFR_C/D"/>
</dbReference>
<dbReference type="NCBIfam" id="NF003445">
    <property type="entry name" value="PRK04987.1"/>
    <property type="match status" value="1"/>
</dbReference>
<dbReference type="Pfam" id="PF02300">
    <property type="entry name" value="Fumarate_red_C"/>
    <property type="match status" value="1"/>
</dbReference>
<dbReference type="PIRSF" id="PIRSF000180">
    <property type="entry name" value="FrdC"/>
    <property type="match status" value="1"/>
</dbReference>
<dbReference type="SUPFAM" id="SSF81343">
    <property type="entry name" value="Fumarate reductase respiratory complex transmembrane subunits"/>
    <property type="match status" value="1"/>
</dbReference>
<comment type="function">
    <text evidence="1">Two distinct, membrane-bound, FAD-containing enzymes are responsible for the catalysis of fumarate and succinate interconversion; fumarate reductase is used in anaerobic growth, and succinate dehydrogenase is used in aerobic growth. Anchors the catalytic components of the fumarate reductase complex to the cell inner membrane, binds quinones.</text>
</comment>
<comment type="subunit">
    <text evidence="1">Part of an enzyme complex containing four subunits: a flavoprotein (FrdA), an iron-sulfur protein (FrdB), and two hydrophobic anchor proteins (FrdC and FrdD).</text>
</comment>
<comment type="subcellular location">
    <subcellularLocation>
        <location evidence="1">Cell inner membrane</location>
        <topology evidence="1">Multi-pass membrane protein</topology>
    </subcellularLocation>
</comment>
<comment type="similarity">
    <text evidence="1">Belongs to the FrdC family.</text>
</comment>
<proteinExistence type="inferred from homology"/>
<evidence type="ECO:0000255" key="1">
    <source>
        <dbReference type="HAMAP-Rule" id="MF_00708"/>
    </source>
</evidence>
<protein>
    <recommendedName>
        <fullName evidence="1">Fumarate reductase subunit C</fullName>
    </recommendedName>
    <alternativeName>
        <fullName evidence="1">Fumarate reductase 15 kDa hydrophobic protein</fullName>
    </alternativeName>
    <alternativeName>
        <fullName evidence="1">Quinol-fumarate reductase subunit C</fullName>
        <shortName evidence="1">QFR subunit C</shortName>
    </alternativeName>
</protein>
<feature type="chain" id="PRO_0000196534" description="Fumarate reductase subunit C">
    <location>
        <begin position="1"/>
        <end position="131"/>
    </location>
</feature>
<feature type="transmembrane region" description="Helical" evidence="1">
    <location>
        <begin position="30"/>
        <end position="50"/>
    </location>
</feature>
<feature type="transmembrane region" description="Helical" evidence="1">
    <location>
        <begin position="57"/>
        <end position="77"/>
    </location>
</feature>
<feature type="transmembrane region" description="Helical" evidence="1">
    <location>
        <begin position="109"/>
        <end position="129"/>
    </location>
</feature>
<name>FRDC_SALTY</name>
<sequence>MTTKRKPYVRPMTSTWWKKLPFYRFYMLREGTAVPAVWFSIELIFGLFALKHGAESWMGFVGFLQNPVVVILNLITLAAALLHTKTWFELAPKAANIIVKDEKMGPEPIIKGLWVVTAVVTVVILYVALFW</sequence>
<keyword id="KW-0997">Cell inner membrane</keyword>
<keyword id="KW-1003">Cell membrane</keyword>
<keyword id="KW-0472">Membrane</keyword>
<keyword id="KW-1185">Reference proteome</keyword>
<keyword id="KW-0812">Transmembrane</keyword>
<keyword id="KW-1133">Transmembrane helix</keyword>
<accession>P67638</accession>
<accession>Q8XGA6</accession>
<organism>
    <name type="scientific">Salmonella typhimurium (strain LT2 / SGSC1412 / ATCC 700720)</name>
    <dbReference type="NCBI Taxonomy" id="99287"/>
    <lineage>
        <taxon>Bacteria</taxon>
        <taxon>Pseudomonadati</taxon>
        <taxon>Pseudomonadota</taxon>
        <taxon>Gammaproteobacteria</taxon>
        <taxon>Enterobacterales</taxon>
        <taxon>Enterobacteriaceae</taxon>
        <taxon>Salmonella</taxon>
    </lineage>
</organism>
<reference key="1">
    <citation type="journal article" date="2001" name="Nature">
        <title>Complete genome sequence of Salmonella enterica serovar Typhimurium LT2.</title>
        <authorList>
            <person name="McClelland M."/>
            <person name="Sanderson K.E."/>
            <person name="Spieth J."/>
            <person name="Clifton S.W."/>
            <person name="Latreille P."/>
            <person name="Courtney L."/>
            <person name="Porwollik S."/>
            <person name="Ali J."/>
            <person name="Dante M."/>
            <person name="Du F."/>
            <person name="Hou S."/>
            <person name="Layman D."/>
            <person name="Leonard S."/>
            <person name="Nguyen C."/>
            <person name="Scott K."/>
            <person name="Holmes A."/>
            <person name="Grewal N."/>
            <person name="Mulvaney E."/>
            <person name="Ryan E."/>
            <person name="Sun H."/>
            <person name="Florea L."/>
            <person name="Miller W."/>
            <person name="Stoneking T."/>
            <person name="Nhan M."/>
            <person name="Waterston R."/>
            <person name="Wilson R.K."/>
        </authorList>
    </citation>
    <scope>NUCLEOTIDE SEQUENCE [LARGE SCALE GENOMIC DNA]</scope>
    <source>
        <strain>LT2 / SGSC1412 / ATCC 700720</strain>
    </source>
</reference>
<gene>
    <name evidence="1" type="primary">frdC</name>
    <name type="ordered locus">STM4341</name>
</gene>